<evidence type="ECO:0000250" key="1"/>
<evidence type="ECO:0000269" key="2">
    <source ref="1"/>
</evidence>
<evidence type="ECO:0000305" key="3"/>
<reference key="1">
    <citation type="journal article" date="2001" name="Fish. Sci.">
        <title>Primary and secondary structures of grammistins, peptide toxins isolated from the skin secretion of the soapfish Pogonoperca punctata.</title>
        <authorList>
            <person name="Shiomi K."/>
            <person name="Yokota H."/>
            <person name="Nagashima Y."/>
            <person name="Ishida M."/>
        </authorList>
    </citation>
    <scope>PROTEIN SEQUENCE</scope>
    <scope>MASS SPECTROMETRY</scope>
    <source>
        <tissue>Skin secretion</tissue>
    </source>
</reference>
<proteinExistence type="evidence at protein level"/>
<dbReference type="GO" id="GO:0005576">
    <property type="term" value="C:extracellular region"/>
    <property type="evidence" value="ECO:0007669"/>
    <property type="project" value="UniProtKB-SubCell"/>
</dbReference>
<dbReference type="GO" id="GO:0090729">
    <property type="term" value="F:toxin activity"/>
    <property type="evidence" value="ECO:0007669"/>
    <property type="project" value="UniProtKB-KW"/>
</dbReference>
<dbReference type="GO" id="GO:0042742">
    <property type="term" value="P:defense response to bacterium"/>
    <property type="evidence" value="ECO:0007669"/>
    <property type="project" value="UniProtKB-KW"/>
</dbReference>
<dbReference type="GO" id="GO:0031640">
    <property type="term" value="P:killing of cells of another organism"/>
    <property type="evidence" value="ECO:0007669"/>
    <property type="project" value="UniProtKB-KW"/>
</dbReference>
<comment type="function">
    <text evidence="1">Thanks to its abundant amphiphilic alpha-helices, it may integrate into membrane phospholipids, leading to lysis of the membrane. Its high hemolytic activity is inhibited by phospholipids, but not by cholesterol. Has antibacterial activity with a broad spectrum against various species of bacteria including both Gram-positive and Gram-negative groups. Also has high ichthyotoxic activity (By similarity).</text>
</comment>
<comment type="subunit">
    <text evidence="3">Exists as aggregates of 3-4 molecules.</text>
</comment>
<comment type="subcellular location">
    <subcellularLocation>
        <location>Secreted</location>
    </subcellularLocation>
</comment>
<comment type="tissue specificity">
    <text>Expressed by the skin glands.</text>
</comment>
<comment type="mass spectrometry"/>
<comment type="similarity">
    <text evidence="3">Belongs to the grammistin family. Group 1 subfamily.</text>
</comment>
<accession>P69837</accession>
<name>GRA4A_POGPU</name>
<feature type="peptide" id="PRO_0000044520" description="Grammistin Pp 4a">
    <location>
        <begin position="1"/>
        <end position="24"/>
    </location>
</feature>
<organism>
    <name type="scientific">Pogonoperca punctata</name>
    <name type="common">Clown grouper</name>
    <name type="synonym">Grammistes punctatus</name>
    <dbReference type="NCBI Taxonomy" id="160738"/>
    <lineage>
        <taxon>Eukaryota</taxon>
        <taxon>Metazoa</taxon>
        <taxon>Chordata</taxon>
        <taxon>Craniata</taxon>
        <taxon>Vertebrata</taxon>
        <taxon>Euteleostomi</taxon>
        <taxon>Actinopterygii</taxon>
        <taxon>Neopterygii</taxon>
        <taxon>Teleostei</taxon>
        <taxon>Neoteleostei</taxon>
        <taxon>Acanthomorphata</taxon>
        <taxon>Eupercaria</taxon>
        <taxon>Perciformes</taxon>
        <taxon>Serranoidei</taxon>
        <taxon>Serranidae</taxon>
        <taxon>Epinephelinae</taxon>
        <taxon>Grammistini</taxon>
        <taxon>Pogonoperca</taxon>
    </lineage>
</organism>
<sequence>LFGFLIPLLPHIIGAIPQVIGAIR</sequence>
<protein>
    <recommendedName>
        <fullName>Grammistin Pp 4a</fullName>
    </recommendedName>
</protein>
<keyword id="KW-0044">Antibiotic</keyword>
<keyword id="KW-0929">Antimicrobial</keyword>
<keyword id="KW-0204">Cytolysis</keyword>
<keyword id="KW-0903">Direct protein sequencing</keyword>
<keyword id="KW-0354">Hemolysis</keyword>
<keyword id="KW-0964">Secreted</keyword>
<keyword id="KW-0800">Toxin</keyword>